<reference key="1">
    <citation type="journal article" date="2007" name="J. Bacteriol.">
        <title>Genome-wide transcriptional changes in Streptococcus gordonii in response to competence signaling peptide.</title>
        <authorList>
            <person name="Vickerman M.M."/>
            <person name="Iobst S."/>
            <person name="Jesionowski A.M."/>
            <person name="Gill S.R."/>
        </authorList>
    </citation>
    <scope>NUCLEOTIDE SEQUENCE [LARGE SCALE GENOMIC DNA]</scope>
    <source>
        <strain>Challis / ATCC 35105 / BCRC 15272 / CH1 / DL1 / V288</strain>
    </source>
</reference>
<evidence type="ECO:0000255" key="1">
    <source>
        <dbReference type="HAMAP-Rule" id="MF_00291"/>
    </source>
</evidence>
<evidence type="ECO:0000305" key="2"/>
<name>RS2_STRGC</name>
<sequence>MAVISMKQLLEAGVHFGHQTRRWNPKMAKYIFTERNGIHVIDLQQTVKYADQAYDFIRDAAANDAIILFVGTKKQAAEAVKDEAERAGQYYINHRWLGGTLTNWSTIQKRVARLKEIKRMEEDGTFEVLPKKEVALLNKQRARLEKFLGGIEEMPRIPDVMYVVDPHKEQIAVKEAKKLGIPVVAMVDTNTDPDDIDVIIPSNDDAIRAVKLITAKMADAIIEGRQGEDSVESVEAELAATETQADSIEEIVEVVEGDNA</sequence>
<feature type="chain" id="PRO_1000078906" description="Small ribosomal subunit protein uS2">
    <location>
        <begin position="1"/>
        <end position="260"/>
    </location>
</feature>
<organism>
    <name type="scientific">Streptococcus gordonii (strain Challis / ATCC 35105 / BCRC 15272 / CH1 / DL1 / V288)</name>
    <dbReference type="NCBI Taxonomy" id="467705"/>
    <lineage>
        <taxon>Bacteria</taxon>
        <taxon>Bacillati</taxon>
        <taxon>Bacillota</taxon>
        <taxon>Bacilli</taxon>
        <taxon>Lactobacillales</taxon>
        <taxon>Streptococcaceae</taxon>
        <taxon>Streptococcus</taxon>
    </lineage>
</organism>
<proteinExistence type="inferred from homology"/>
<accession>A8AZP1</accession>
<protein>
    <recommendedName>
        <fullName evidence="1">Small ribosomal subunit protein uS2</fullName>
    </recommendedName>
    <alternativeName>
        <fullName evidence="2">30S ribosomal protein S2</fullName>
    </alternativeName>
</protein>
<dbReference type="EMBL" id="CP000725">
    <property type="protein sequence ID" value="ABV09599.1"/>
    <property type="molecule type" value="Genomic_DNA"/>
</dbReference>
<dbReference type="RefSeq" id="WP_008809924.1">
    <property type="nucleotide sequence ID" value="NC_009785.1"/>
</dbReference>
<dbReference type="SMR" id="A8AZP1"/>
<dbReference type="STRING" id="467705.SGO_2001"/>
<dbReference type="GeneID" id="93786827"/>
<dbReference type="KEGG" id="sgo:SGO_2001"/>
<dbReference type="eggNOG" id="COG0052">
    <property type="taxonomic scope" value="Bacteria"/>
</dbReference>
<dbReference type="HOGENOM" id="CLU_040318_1_2_9"/>
<dbReference type="Proteomes" id="UP000001131">
    <property type="component" value="Chromosome"/>
</dbReference>
<dbReference type="GO" id="GO:0022627">
    <property type="term" value="C:cytosolic small ribosomal subunit"/>
    <property type="evidence" value="ECO:0007669"/>
    <property type="project" value="TreeGrafter"/>
</dbReference>
<dbReference type="GO" id="GO:0003735">
    <property type="term" value="F:structural constituent of ribosome"/>
    <property type="evidence" value="ECO:0007669"/>
    <property type="project" value="InterPro"/>
</dbReference>
<dbReference type="GO" id="GO:0006412">
    <property type="term" value="P:translation"/>
    <property type="evidence" value="ECO:0007669"/>
    <property type="project" value="UniProtKB-UniRule"/>
</dbReference>
<dbReference type="CDD" id="cd01425">
    <property type="entry name" value="RPS2"/>
    <property type="match status" value="1"/>
</dbReference>
<dbReference type="FunFam" id="1.10.287.610:FF:000001">
    <property type="entry name" value="30S ribosomal protein S2"/>
    <property type="match status" value="1"/>
</dbReference>
<dbReference type="Gene3D" id="3.40.50.10490">
    <property type="entry name" value="Glucose-6-phosphate isomerase like protein, domain 1"/>
    <property type="match status" value="1"/>
</dbReference>
<dbReference type="Gene3D" id="1.10.287.610">
    <property type="entry name" value="Helix hairpin bin"/>
    <property type="match status" value="1"/>
</dbReference>
<dbReference type="HAMAP" id="MF_00291_B">
    <property type="entry name" value="Ribosomal_uS2_B"/>
    <property type="match status" value="1"/>
</dbReference>
<dbReference type="InterPro" id="IPR001865">
    <property type="entry name" value="Ribosomal_uS2"/>
</dbReference>
<dbReference type="InterPro" id="IPR005706">
    <property type="entry name" value="Ribosomal_uS2_bac/mit/plastid"/>
</dbReference>
<dbReference type="InterPro" id="IPR018130">
    <property type="entry name" value="Ribosomal_uS2_CS"/>
</dbReference>
<dbReference type="InterPro" id="IPR023591">
    <property type="entry name" value="Ribosomal_uS2_flav_dom_sf"/>
</dbReference>
<dbReference type="NCBIfam" id="TIGR01011">
    <property type="entry name" value="rpsB_bact"/>
    <property type="match status" value="1"/>
</dbReference>
<dbReference type="PANTHER" id="PTHR12534">
    <property type="entry name" value="30S RIBOSOMAL PROTEIN S2 PROKARYOTIC AND ORGANELLAR"/>
    <property type="match status" value="1"/>
</dbReference>
<dbReference type="PANTHER" id="PTHR12534:SF0">
    <property type="entry name" value="SMALL RIBOSOMAL SUBUNIT PROTEIN US2M"/>
    <property type="match status" value="1"/>
</dbReference>
<dbReference type="Pfam" id="PF00318">
    <property type="entry name" value="Ribosomal_S2"/>
    <property type="match status" value="1"/>
</dbReference>
<dbReference type="PRINTS" id="PR00395">
    <property type="entry name" value="RIBOSOMALS2"/>
</dbReference>
<dbReference type="SUPFAM" id="SSF52313">
    <property type="entry name" value="Ribosomal protein S2"/>
    <property type="match status" value="1"/>
</dbReference>
<dbReference type="PROSITE" id="PS00962">
    <property type="entry name" value="RIBOSOMAL_S2_1"/>
    <property type="match status" value="1"/>
</dbReference>
<comment type="similarity">
    <text evidence="1">Belongs to the universal ribosomal protein uS2 family.</text>
</comment>
<keyword id="KW-1185">Reference proteome</keyword>
<keyword id="KW-0687">Ribonucleoprotein</keyword>
<keyword id="KW-0689">Ribosomal protein</keyword>
<gene>
    <name evidence="1" type="primary">rpsB</name>
    <name type="ordered locus">SGO_2001</name>
</gene>